<reference key="1">
    <citation type="submission" date="2007-08" db="EMBL/GenBank/DDBJ databases">
        <authorList>
            <consortium name="The Citrobacter koseri Genome Sequencing Project"/>
            <person name="McClelland M."/>
            <person name="Sanderson E.K."/>
            <person name="Porwollik S."/>
            <person name="Spieth J."/>
            <person name="Clifton W.S."/>
            <person name="Latreille P."/>
            <person name="Courtney L."/>
            <person name="Wang C."/>
            <person name="Pepin K."/>
            <person name="Bhonagiri V."/>
            <person name="Nash W."/>
            <person name="Johnson M."/>
            <person name="Thiruvilangam P."/>
            <person name="Wilson R."/>
        </authorList>
    </citation>
    <scope>NUCLEOTIDE SEQUENCE [LARGE SCALE GENOMIC DNA]</scope>
    <source>
        <strain>ATCC BAA-895 / CDC 4225-83 / SGSC4696</strain>
    </source>
</reference>
<gene>
    <name evidence="1" type="primary">argS</name>
    <name type="ordered locus">CKO_01085</name>
</gene>
<name>SYR_CITK8</name>
<sequence>MNIQALLSEKVSQAMIVAGAPANCEPQVRQSAKVQFGDYQANGMMAVAKKLGMAPRQLAEQVLTHLDLNGIASKVEIAGPGFINIFLDPAFLAEHVQQALASERLGVAKPAKQTVVIDYSAPNVAKEMHVGHLRSTIIGDAAVRTLEFLGHHVIRANHVGDWGTQFGMLIAWLEKQQQENAGEMALADLEGFYRDAKKHYDEDEAFAERARNYVVKLQGGDPYFLDMWRKLVDITMTQNQITYNRLNVTLTRDDVMGESLYNPMLPGIVADLKAQGLAVESEGATVVFLDEYKNKEGEPMGVIIQKKDGGYLYTTTDIACAKYRYETLHADRVLYYIDSRQHQHLMQAWTIVRKAGYVPDSVPLEHHMFGMMLGKDGKPFKTRAGGTVKLADLLDEALERARRLVAEKNPDMPADELEKLANAVGIGAVKYADLSKNRTTDYIFDWDNMLAFEGNTAPYMQYAYTRVLSVFRKAEIDESALSSAPVVIREDREAQLAARLLQFEETLTVVAREGTPHVMCAYLYDIAGLFSGFYEHCPILSAENEEVRNSRLKLAQLTAKTLKLGLDTLGIETVERM</sequence>
<evidence type="ECO:0000255" key="1">
    <source>
        <dbReference type="HAMAP-Rule" id="MF_00123"/>
    </source>
</evidence>
<accession>A8AFG5</accession>
<keyword id="KW-0030">Aminoacyl-tRNA synthetase</keyword>
<keyword id="KW-0067">ATP-binding</keyword>
<keyword id="KW-0963">Cytoplasm</keyword>
<keyword id="KW-0436">Ligase</keyword>
<keyword id="KW-0547">Nucleotide-binding</keyword>
<keyword id="KW-0648">Protein biosynthesis</keyword>
<keyword id="KW-1185">Reference proteome</keyword>
<protein>
    <recommendedName>
        <fullName evidence="1">Arginine--tRNA ligase</fullName>
        <ecNumber evidence="1">6.1.1.19</ecNumber>
    </recommendedName>
    <alternativeName>
        <fullName evidence="1">Arginyl-tRNA synthetase</fullName>
        <shortName evidence="1">ArgRS</shortName>
    </alternativeName>
</protein>
<comment type="catalytic activity">
    <reaction evidence="1">
        <text>tRNA(Arg) + L-arginine + ATP = L-arginyl-tRNA(Arg) + AMP + diphosphate</text>
        <dbReference type="Rhea" id="RHEA:20301"/>
        <dbReference type="Rhea" id="RHEA-COMP:9658"/>
        <dbReference type="Rhea" id="RHEA-COMP:9673"/>
        <dbReference type="ChEBI" id="CHEBI:30616"/>
        <dbReference type="ChEBI" id="CHEBI:32682"/>
        <dbReference type="ChEBI" id="CHEBI:33019"/>
        <dbReference type="ChEBI" id="CHEBI:78442"/>
        <dbReference type="ChEBI" id="CHEBI:78513"/>
        <dbReference type="ChEBI" id="CHEBI:456215"/>
        <dbReference type="EC" id="6.1.1.19"/>
    </reaction>
</comment>
<comment type="subunit">
    <text evidence="1">Monomer.</text>
</comment>
<comment type="subcellular location">
    <subcellularLocation>
        <location evidence="1">Cytoplasm</location>
    </subcellularLocation>
</comment>
<comment type="similarity">
    <text evidence="1">Belongs to the class-I aminoacyl-tRNA synthetase family.</text>
</comment>
<dbReference type="EC" id="6.1.1.19" evidence="1"/>
<dbReference type="EMBL" id="CP000822">
    <property type="protein sequence ID" value="ABV12228.1"/>
    <property type="molecule type" value="Genomic_DNA"/>
</dbReference>
<dbReference type="RefSeq" id="WP_012131982.1">
    <property type="nucleotide sequence ID" value="NC_009792.1"/>
</dbReference>
<dbReference type="SMR" id="A8AFG5"/>
<dbReference type="STRING" id="290338.CKO_01085"/>
<dbReference type="GeneID" id="45135236"/>
<dbReference type="KEGG" id="cko:CKO_01085"/>
<dbReference type="HOGENOM" id="CLU_006406_5_1_6"/>
<dbReference type="OrthoDB" id="9803211at2"/>
<dbReference type="Proteomes" id="UP000008148">
    <property type="component" value="Chromosome"/>
</dbReference>
<dbReference type="GO" id="GO:0005737">
    <property type="term" value="C:cytoplasm"/>
    <property type="evidence" value="ECO:0007669"/>
    <property type="project" value="UniProtKB-SubCell"/>
</dbReference>
<dbReference type="GO" id="GO:0004814">
    <property type="term" value="F:arginine-tRNA ligase activity"/>
    <property type="evidence" value="ECO:0007669"/>
    <property type="project" value="UniProtKB-UniRule"/>
</dbReference>
<dbReference type="GO" id="GO:0005524">
    <property type="term" value="F:ATP binding"/>
    <property type="evidence" value="ECO:0007669"/>
    <property type="project" value="UniProtKB-UniRule"/>
</dbReference>
<dbReference type="GO" id="GO:0006420">
    <property type="term" value="P:arginyl-tRNA aminoacylation"/>
    <property type="evidence" value="ECO:0007669"/>
    <property type="project" value="UniProtKB-UniRule"/>
</dbReference>
<dbReference type="CDD" id="cd07956">
    <property type="entry name" value="Anticodon_Ia_Arg"/>
    <property type="match status" value="1"/>
</dbReference>
<dbReference type="CDD" id="cd00671">
    <property type="entry name" value="ArgRS_core"/>
    <property type="match status" value="1"/>
</dbReference>
<dbReference type="FunFam" id="1.10.730.10:FF:000001">
    <property type="entry name" value="Arginine--tRNA ligase"/>
    <property type="match status" value="1"/>
</dbReference>
<dbReference type="FunFam" id="3.30.1360.70:FF:000001">
    <property type="entry name" value="Arginine--tRNA ligase"/>
    <property type="match status" value="1"/>
</dbReference>
<dbReference type="FunFam" id="3.40.50.620:FF:000030">
    <property type="entry name" value="Arginine--tRNA ligase"/>
    <property type="match status" value="1"/>
</dbReference>
<dbReference type="Gene3D" id="3.30.1360.70">
    <property type="entry name" value="Arginyl tRNA synthetase N-terminal domain"/>
    <property type="match status" value="1"/>
</dbReference>
<dbReference type="Gene3D" id="3.40.50.620">
    <property type="entry name" value="HUPs"/>
    <property type="match status" value="1"/>
</dbReference>
<dbReference type="Gene3D" id="1.10.730.10">
    <property type="entry name" value="Isoleucyl-tRNA Synthetase, Domain 1"/>
    <property type="match status" value="1"/>
</dbReference>
<dbReference type="HAMAP" id="MF_00123">
    <property type="entry name" value="Arg_tRNA_synth"/>
    <property type="match status" value="1"/>
</dbReference>
<dbReference type="InterPro" id="IPR001412">
    <property type="entry name" value="aa-tRNA-synth_I_CS"/>
</dbReference>
<dbReference type="InterPro" id="IPR001278">
    <property type="entry name" value="Arg-tRNA-ligase"/>
</dbReference>
<dbReference type="InterPro" id="IPR005148">
    <property type="entry name" value="Arg-tRNA-synth_N"/>
</dbReference>
<dbReference type="InterPro" id="IPR036695">
    <property type="entry name" value="Arg-tRNA-synth_N_sf"/>
</dbReference>
<dbReference type="InterPro" id="IPR035684">
    <property type="entry name" value="ArgRS_core"/>
</dbReference>
<dbReference type="InterPro" id="IPR008909">
    <property type="entry name" value="DALR_anticod-bd"/>
</dbReference>
<dbReference type="InterPro" id="IPR014729">
    <property type="entry name" value="Rossmann-like_a/b/a_fold"/>
</dbReference>
<dbReference type="InterPro" id="IPR009080">
    <property type="entry name" value="tRNAsynth_Ia_anticodon-bd"/>
</dbReference>
<dbReference type="NCBIfam" id="TIGR00456">
    <property type="entry name" value="argS"/>
    <property type="match status" value="1"/>
</dbReference>
<dbReference type="PANTHER" id="PTHR11956:SF5">
    <property type="entry name" value="ARGININE--TRNA LIGASE, CYTOPLASMIC"/>
    <property type="match status" value="1"/>
</dbReference>
<dbReference type="PANTHER" id="PTHR11956">
    <property type="entry name" value="ARGINYL-TRNA SYNTHETASE"/>
    <property type="match status" value="1"/>
</dbReference>
<dbReference type="Pfam" id="PF03485">
    <property type="entry name" value="Arg_tRNA_synt_N"/>
    <property type="match status" value="1"/>
</dbReference>
<dbReference type="Pfam" id="PF05746">
    <property type="entry name" value="DALR_1"/>
    <property type="match status" value="1"/>
</dbReference>
<dbReference type="Pfam" id="PF00750">
    <property type="entry name" value="tRNA-synt_1d"/>
    <property type="match status" value="1"/>
</dbReference>
<dbReference type="PRINTS" id="PR01038">
    <property type="entry name" value="TRNASYNTHARG"/>
</dbReference>
<dbReference type="SMART" id="SM01016">
    <property type="entry name" value="Arg_tRNA_synt_N"/>
    <property type="match status" value="1"/>
</dbReference>
<dbReference type="SMART" id="SM00836">
    <property type="entry name" value="DALR_1"/>
    <property type="match status" value="1"/>
</dbReference>
<dbReference type="SUPFAM" id="SSF47323">
    <property type="entry name" value="Anticodon-binding domain of a subclass of class I aminoacyl-tRNA synthetases"/>
    <property type="match status" value="1"/>
</dbReference>
<dbReference type="SUPFAM" id="SSF55190">
    <property type="entry name" value="Arginyl-tRNA synthetase (ArgRS), N-terminal 'additional' domain"/>
    <property type="match status" value="1"/>
</dbReference>
<dbReference type="SUPFAM" id="SSF52374">
    <property type="entry name" value="Nucleotidylyl transferase"/>
    <property type="match status" value="1"/>
</dbReference>
<dbReference type="PROSITE" id="PS00178">
    <property type="entry name" value="AA_TRNA_LIGASE_I"/>
    <property type="match status" value="1"/>
</dbReference>
<organism>
    <name type="scientific">Citrobacter koseri (strain ATCC BAA-895 / CDC 4225-83 / SGSC4696)</name>
    <dbReference type="NCBI Taxonomy" id="290338"/>
    <lineage>
        <taxon>Bacteria</taxon>
        <taxon>Pseudomonadati</taxon>
        <taxon>Pseudomonadota</taxon>
        <taxon>Gammaproteobacteria</taxon>
        <taxon>Enterobacterales</taxon>
        <taxon>Enterobacteriaceae</taxon>
        <taxon>Citrobacter</taxon>
    </lineage>
</organism>
<proteinExistence type="inferred from homology"/>
<feature type="chain" id="PRO_1000018014" description="Arginine--tRNA ligase">
    <location>
        <begin position="1"/>
        <end position="577"/>
    </location>
</feature>
<feature type="short sequence motif" description="'HIGH' region">
    <location>
        <begin position="122"/>
        <end position="132"/>
    </location>
</feature>